<evidence type="ECO:0000255" key="1">
    <source>
        <dbReference type="HAMAP-Rule" id="MF_01369"/>
    </source>
</evidence>
<evidence type="ECO:0000305" key="2"/>
<comment type="function">
    <text evidence="1">One of the early assembly proteins it binds 23S rRNA. One of the proteins that surrounds the polypeptide exit tunnel on the outside of the ribosome. Forms the main docking site for trigger factor binding to the ribosome.</text>
</comment>
<comment type="subunit">
    <text evidence="1">Part of the 50S ribosomal subunit. Contacts protein L29, and trigger factor when it is bound to the ribosome.</text>
</comment>
<comment type="similarity">
    <text evidence="1">Belongs to the universal ribosomal protein uL23 family.</text>
</comment>
<proteinExistence type="inferred from homology"/>
<keyword id="KW-0687">Ribonucleoprotein</keyword>
<keyword id="KW-0689">Ribosomal protein</keyword>
<keyword id="KW-0694">RNA-binding</keyword>
<keyword id="KW-0699">rRNA-binding</keyword>
<name>RL23_BORPA</name>
<reference key="1">
    <citation type="journal article" date="2003" name="Nat. Genet.">
        <title>Comparative analysis of the genome sequences of Bordetella pertussis, Bordetella parapertussis and Bordetella bronchiseptica.</title>
        <authorList>
            <person name="Parkhill J."/>
            <person name="Sebaihia M."/>
            <person name="Preston A."/>
            <person name="Murphy L.D."/>
            <person name="Thomson N.R."/>
            <person name="Harris D.E."/>
            <person name="Holden M.T.G."/>
            <person name="Churcher C.M."/>
            <person name="Bentley S.D."/>
            <person name="Mungall K.L."/>
            <person name="Cerdeno-Tarraga A.-M."/>
            <person name="Temple L."/>
            <person name="James K.D."/>
            <person name="Harris B."/>
            <person name="Quail M.A."/>
            <person name="Achtman M."/>
            <person name="Atkin R."/>
            <person name="Baker S."/>
            <person name="Basham D."/>
            <person name="Bason N."/>
            <person name="Cherevach I."/>
            <person name="Chillingworth T."/>
            <person name="Collins M."/>
            <person name="Cronin A."/>
            <person name="Davis P."/>
            <person name="Doggett J."/>
            <person name="Feltwell T."/>
            <person name="Goble A."/>
            <person name="Hamlin N."/>
            <person name="Hauser H."/>
            <person name="Holroyd S."/>
            <person name="Jagels K."/>
            <person name="Leather S."/>
            <person name="Moule S."/>
            <person name="Norberczak H."/>
            <person name="O'Neil S."/>
            <person name="Ormond D."/>
            <person name="Price C."/>
            <person name="Rabbinowitsch E."/>
            <person name="Rutter S."/>
            <person name="Sanders M."/>
            <person name="Saunders D."/>
            <person name="Seeger K."/>
            <person name="Sharp S."/>
            <person name="Simmonds M."/>
            <person name="Skelton J."/>
            <person name="Squares R."/>
            <person name="Squares S."/>
            <person name="Stevens K."/>
            <person name="Unwin L."/>
            <person name="Whitehead S."/>
            <person name="Barrell B.G."/>
            <person name="Maskell D.J."/>
        </authorList>
    </citation>
    <scope>NUCLEOTIDE SEQUENCE [LARGE SCALE GENOMIC DNA]</scope>
    <source>
        <strain>12822 / ATCC BAA-587 / NCTC 13253</strain>
    </source>
</reference>
<accession>Q7W2F4</accession>
<organism>
    <name type="scientific">Bordetella parapertussis (strain 12822 / ATCC BAA-587 / NCTC 13253)</name>
    <dbReference type="NCBI Taxonomy" id="257311"/>
    <lineage>
        <taxon>Bacteria</taxon>
        <taxon>Pseudomonadati</taxon>
        <taxon>Pseudomonadota</taxon>
        <taxon>Betaproteobacteria</taxon>
        <taxon>Burkholderiales</taxon>
        <taxon>Alcaligenaceae</taxon>
        <taxon>Bordetella</taxon>
    </lineage>
</organism>
<protein>
    <recommendedName>
        <fullName evidence="1">Large ribosomal subunit protein uL23</fullName>
    </recommendedName>
    <alternativeName>
        <fullName evidence="2">50S ribosomal protein L23</fullName>
    </alternativeName>
</protein>
<feature type="chain" id="PRO_0000272712" description="Large ribosomal subunit protein uL23">
    <location>
        <begin position="1"/>
        <end position="98"/>
    </location>
</feature>
<sequence>MNAERLMQVILAPIVTEKATFVAEKNQQVAFRVVADATKPEIKAAVELLFKVQVESVQVLNRKGKVKRFGRFVGRRRNERKAYVALKDGQEIDFAEVK</sequence>
<gene>
    <name evidence="1" type="primary">rplW</name>
    <name type="ordered locus">BPP0031</name>
</gene>
<dbReference type="EMBL" id="BX640423">
    <property type="protein sequence ID" value="CAE39772.1"/>
    <property type="molecule type" value="Genomic_DNA"/>
</dbReference>
<dbReference type="RefSeq" id="WP_003806906.1">
    <property type="nucleotide sequence ID" value="NC_002928.3"/>
</dbReference>
<dbReference type="SMR" id="Q7W2F4"/>
<dbReference type="GeneID" id="93206260"/>
<dbReference type="KEGG" id="bpa:BPP0031"/>
<dbReference type="HOGENOM" id="CLU_037562_3_1_4"/>
<dbReference type="Proteomes" id="UP000001421">
    <property type="component" value="Chromosome"/>
</dbReference>
<dbReference type="GO" id="GO:1990904">
    <property type="term" value="C:ribonucleoprotein complex"/>
    <property type="evidence" value="ECO:0007669"/>
    <property type="project" value="UniProtKB-KW"/>
</dbReference>
<dbReference type="GO" id="GO:0005840">
    <property type="term" value="C:ribosome"/>
    <property type="evidence" value="ECO:0007669"/>
    <property type="project" value="UniProtKB-KW"/>
</dbReference>
<dbReference type="GO" id="GO:0019843">
    <property type="term" value="F:rRNA binding"/>
    <property type="evidence" value="ECO:0007669"/>
    <property type="project" value="UniProtKB-UniRule"/>
</dbReference>
<dbReference type="GO" id="GO:0003735">
    <property type="term" value="F:structural constituent of ribosome"/>
    <property type="evidence" value="ECO:0007669"/>
    <property type="project" value="InterPro"/>
</dbReference>
<dbReference type="GO" id="GO:0006412">
    <property type="term" value="P:translation"/>
    <property type="evidence" value="ECO:0007669"/>
    <property type="project" value="UniProtKB-UniRule"/>
</dbReference>
<dbReference type="FunFam" id="3.30.70.330:FF:000001">
    <property type="entry name" value="50S ribosomal protein L23"/>
    <property type="match status" value="1"/>
</dbReference>
<dbReference type="Gene3D" id="3.30.70.330">
    <property type="match status" value="1"/>
</dbReference>
<dbReference type="HAMAP" id="MF_01369_B">
    <property type="entry name" value="Ribosomal_uL23_B"/>
    <property type="match status" value="1"/>
</dbReference>
<dbReference type="InterPro" id="IPR012677">
    <property type="entry name" value="Nucleotide-bd_a/b_plait_sf"/>
</dbReference>
<dbReference type="InterPro" id="IPR013025">
    <property type="entry name" value="Ribosomal_uL23-like"/>
</dbReference>
<dbReference type="InterPro" id="IPR012678">
    <property type="entry name" value="Ribosomal_uL23/eL15/eS24_sf"/>
</dbReference>
<dbReference type="NCBIfam" id="NF004359">
    <property type="entry name" value="PRK05738.1-3"/>
    <property type="match status" value="1"/>
</dbReference>
<dbReference type="NCBIfam" id="NF004363">
    <property type="entry name" value="PRK05738.2-4"/>
    <property type="match status" value="1"/>
</dbReference>
<dbReference type="PANTHER" id="PTHR11620">
    <property type="entry name" value="60S RIBOSOMAL PROTEIN L23A"/>
    <property type="match status" value="1"/>
</dbReference>
<dbReference type="Pfam" id="PF00276">
    <property type="entry name" value="Ribosomal_L23"/>
    <property type="match status" value="1"/>
</dbReference>
<dbReference type="SUPFAM" id="SSF54189">
    <property type="entry name" value="Ribosomal proteins S24e, L23 and L15e"/>
    <property type="match status" value="1"/>
</dbReference>